<name>CLPS_SALG2</name>
<reference key="1">
    <citation type="journal article" date="2008" name="Genome Res.">
        <title>Comparative genome analysis of Salmonella enteritidis PT4 and Salmonella gallinarum 287/91 provides insights into evolutionary and host adaptation pathways.</title>
        <authorList>
            <person name="Thomson N.R."/>
            <person name="Clayton D.J."/>
            <person name="Windhorst D."/>
            <person name="Vernikos G."/>
            <person name="Davidson S."/>
            <person name="Churcher C."/>
            <person name="Quail M.A."/>
            <person name="Stevens M."/>
            <person name="Jones M.A."/>
            <person name="Watson M."/>
            <person name="Barron A."/>
            <person name="Layton A."/>
            <person name="Pickard D."/>
            <person name="Kingsley R.A."/>
            <person name="Bignell A."/>
            <person name="Clark L."/>
            <person name="Harris B."/>
            <person name="Ormond D."/>
            <person name="Abdellah Z."/>
            <person name="Brooks K."/>
            <person name="Cherevach I."/>
            <person name="Chillingworth T."/>
            <person name="Woodward J."/>
            <person name="Norberczak H."/>
            <person name="Lord A."/>
            <person name="Arrowsmith C."/>
            <person name="Jagels K."/>
            <person name="Moule S."/>
            <person name="Mungall K."/>
            <person name="Saunders M."/>
            <person name="Whitehead S."/>
            <person name="Chabalgoity J.A."/>
            <person name="Maskell D."/>
            <person name="Humphreys T."/>
            <person name="Roberts M."/>
            <person name="Barrow P.A."/>
            <person name="Dougan G."/>
            <person name="Parkhill J."/>
        </authorList>
    </citation>
    <scope>NUCLEOTIDE SEQUENCE [LARGE SCALE GENOMIC DNA]</scope>
    <source>
        <strain>287/91 / NCTC 13346</strain>
    </source>
</reference>
<sequence length="106" mass="12186">MGKTNDWLDFDQLVEDSVRDALKPPSMYKVILVNDDYTPMEFVIDVLQKFFSYDVERATQLMFAVHYQGKAICGVFTAEVAETKVAMVNKYARENEHPLLCTLEKA</sequence>
<accession>B5R8G5</accession>
<organism>
    <name type="scientific">Salmonella gallinarum (strain 287/91 / NCTC 13346)</name>
    <dbReference type="NCBI Taxonomy" id="550538"/>
    <lineage>
        <taxon>Bacteria</taxon>
        <taxon>Pseudomonadati</taxon>
        <taxon>Pseudomonadota</taxon>
        <taxon>Gammaproteobacteria</taxon>
        <taxon>Enterobacterales</taxon>
        <taxon>Enterobacteriaceae</taxon>
        <taxon>Salmonella</taxon>
    </lineage>
</organism>
<evidence type="ECO:0000255" key="1">
    <source>
        <dbReference type="HAMAP-Rule" id="MF_00302"/>
    </source>
</evidence>
<proteinExistence type="inferred from homology"/>
<protein>
    <recommendedName>
        <fullName evidence="1">ATP-dependent Clp protease adapter protein ClpS</fullName>
    </recommendedName>
</protein>
<dbReference type="EMBL" id="AM933173">
    <property type="protein sequence ID" value="CAR36780.1"/>
    <property type="molecule type" value="Genomic_DNA"/>
</dbReference>
<dbReference type="RefSeq" id="WP_000520788.1">
    <property type="nucleotide sequence ID" value="NC_011274.1"/>
</dbReference>
<dbReference type="SMR" id="B5R8G5"/>
<dbReference type="KEGG" id="seg:SG0888"/>
<dbReference type="HOGENOM" id="CLU_134358_2_1_6"/>
<dbReference type="Proteomes" id="UP000008321">
    <property type="component" value="Chromosome"/>
</dbReference>
<dbReference type="GO" id="GO:0030163">
    <property type="term" value="P:protein catabolic process"/>
    <property type="evidence" value="ECO:0007669"/>
    <property type="project" value="InterPro"/>
</dbReference>
<dbReference type="GO" id="GO:0006508">
    <property type="term" value="P:proteolysis"/>
    <property type="evidence" value="ECO:0007669"/>
    <property type="project" value="UniProtKB-UniRule"/>
</dbReference>
<dbReference type="FunFam" id="3.30.1390.10:FF:000002">
    <property type="entry name" value="ATP-dependent Clp protease adapter protein ClpS"/>
    <property type="match status" value="1"/>
</dbReference>
<dbReference type="Gene3D" id="3.30.1390.10">
    <property type="match status" value="1"/>
</dbReference>
<dbReference type="HAMAP" id="MF_00302">
    <property type="entry name" value="ClpS"/>
    <property type="match status" value="1"/>
</dbReference>
<dbReference type="InterPro" id="IPR022935">
    <property type="entry name" value="ClpS"/>
</dbReference>
<dbReference type="InterPro" id="IPR003769">
    <property type="entry name" value="ClpS_core"/>
</dbReference>
<dbReference type="InterPro" id="IPR014719">
    <property type="entry name" value="Ribosomal_bL12_C/ClpS-like"/>
</dbReference>
<dbReference type="NCBIfam" id="NF000670">
    <property type="entry name" value="PRK00033.1-3"/>
    <property type="match status" value="1"/>
</dbReference>
<dbReference type="NCBIfam" id="NF000672">
    <property type="entry name" value="PRK00033.1-5"/>
    <property type="match status" value="1"/>
</dbReference>
<dbReference type="PANTHER" id="PTHR33473:SF19">
    <property type="entry name" value="ATP-DEPENDENT CLP PROTEASE ADAPTER PROTEIN CLPS"/>
    <property type="match status" value="1"/>
</dbReference>
<dbReference type="PANTHER" id="PTHR33473">
    <property type="entry name" value="ATP-DEPENDENT CLP PROTEASE ADAPTER PROTEIN CLPS1, CHLOROPLASTIC"/>
    <property type="match status" value="1"/>
</dbReference>
<dbReference type="Pfam" id="PF02617">
    <property type="entry name" value="ClpS"/>
    <property type="match status" value="1"/>
</dbReference>
<dbReference type="SUPFAM" id="SSF54736">
    <property type="entry name" value="ClpS-like"/>
    <property type="match status" value="1"/>
</dbReference>
<feature type="chain" id="PRO_1000115472" description="ATP-dependent Clp protease adapter protein ClpS">
    <location>
        <begin position="1"/>
        <end position="106"/>
    </location>
</feature>
<comment type="function">
    <text evidence="1">Involved in the modulation of the specificity of the ClpAP-mediated ATP-dependent protein degradation.</text>
</comment>
<comment type="subunit">
    <text evidence="1">Binds to the N-terminal domain of the chaperone ClpA.</text>
</comment>
<comment type="similarity">
    <text evidence="1">Belongs to the ClpS family.</text>
</comment>
<gene>
    <name evidence="1" type="primary">clpS</name>
    <name type="ordered locus">SG0888</name>
</gene>